<evidence type="ECO:0000255" key="1">
    <source>
        <dbReference type="HAMAP-Rule" id="MF_04029"/>
    </source>
</evidence>
<evidence type="ECO:0000256" key="2">
    <source>
        <dbReference type="SAM" id="MobiDB-lite"/>
    </source>
</evidence>
<evidence type="ECO:0000305" key="3"/>
<feature type="chain" id="PRO_0000175074" description="Thymidine kinase">
    <location>
        <begin position="1"/>
        <end position="376"/>
    </location>
</feature>
<feature type="region of interest" description="Disordered" evidence="2">
    <location>
        <begin position="1"/>
        <end position="47"/>
    </location>
</feature>
<feature type="active site" description="Proton acceptor" evidence="1">
    <location>
        <position position="84"/>
    </location>
</feature>
<feature type="binding site" evidence="1">
    <location>
        <begin position="56"/>
        <end position="63"/>
    </location>
    <ligand>
        <name>ATP</name>
        <dbReference type="ChEBI" id="CHEBI:30616"/>
    </ligand>
</feature>
<feature type="binding site" evidence="1">
    <location>
        <position position="102"/>
    </location>
    <ligand>
        <name>substrate</name>
    </ligand>
</feature>
<feature type="binding site" evidence="1">
    <location>
        <position position="126"/>
    </location>
    <ligand>
        <name>substrate</name>
    </ligand>
</feature>
<feature type="binding site" evidence="1">
    <location>
        <position position="217"/>
    </location>
    <ligand>
        <name>ATP</name>
        <dbReference type="ChEBI" id="CHEBI:30616"/>
    </ligand>
</feature>
<feature type="binding site" evidence="1">
    <location>
        <position position="223"/>
    </location>
    <ligand>
        <name>substrate</name>
    </ligand>
</feature>
<feature type="sequence conflict" description="In Ref. 1; CAA25858." evidence="3" ref="1">
    <location>
        <position position="271"/>
    </location>
</feature>
<comment type="function">
    <text evidence="1">Catalyzes the transfer of the gamma-phospho group of ATP to thymidine to generate dTMP in the salvage pathway of pyrimidine synthesis. The dTMP serves as a substrate for DNA polymerase during viral DNA replication. Allows the virus to be reactivated and to grow in non-proliferative cells lacking a high concentration of phosphorylated nucleic acid precursors.</text>
</comment>
<comment type="catalytic activity">
    <reaction evidence="1">
        <text>thymidine + ATP = dTMP + ADP + H(+)</text>
        <dbReference type="Rhea" id="RHEA:19129"/>
        <dbReference type="ChEBI" id="CHEBI:15378"/>
        <dbReference type="ChEBI" id="CHEBI:17748"/>
        <dbReference type="ChEBI" id="CHEBI:30616"/>
        <dbReference type="ChEBI" id="CHEBI:63528"/>
        <dbReference type="ChEBI" id="CHEBI:456216"/>
        <dbReference type="EC" id="2.7.1.21"/>
    </reaction>
</comment>
<comment type="subunit">
    <text evidence="1">Homodimer.</text>
</comment>
<comment type="biotechnology">
    <text>Used in molecular biology as a selectable marker to identify transfected eukaryotic cells. Used in cancer suicide gene therapy to selectively kill transformed cells.</text>
</comment>
<comment type="miscellaneous">
    <text>Phosphorylates and thereby activates certain drugs like acyclovir (ACV), valacyclovir, and famciclovir to a toxic form, that leads to successful suppression of the infection, while the uninfected cell does not have this ability because it lacks TK. Mutations in thymidine kinase may induce HSV resistance to antiviral therapies in immunocompromised patients. The most frequently observed resistant strains are unable to express TK and are avirulent in animal models of disease. Resistance may be acquired less frequently by selecting variants which no longer recognize ACV or ACV triphosphate as substrates but which retain normal functions.</text>
</comment>
<comment type="similarity">
    <text evidence="1">Belongs to the herpesviridae thymidine kinase family.</text>
</comment>
<gene>
    <name evidence="1" type="primary">TK</name>
</gene>
<sequence length="376" mass="40467">MASHAGQQHAPAFGQAARASGPTDGRAASRPSHRQGASEARGDPELPTLLRVYIDGPHGVGKTTTSAQLMEALGPRDNIVYVPEPMTYWQVLGASETLTNIYNTQHRLDRGEISAGEAAVVMTSAQITMSTPYAATDAVLAPHIGGEAVGPQAPPPALTLVFDRHPIASLLCYPAARYLMGSMTPQAVLAFVALMPPTAPGTNLVLGVLPEAEHADRLARRQRPGERLDLAMLSAIRRVYDLLANTVRYLQRGGRWREDWGRLTGVAAATPRPDPEDGAGSLPRIEDTLFALFRVPELLAPNGDLYHIFAWVLDVLADRLLPMHLFVLDYDQSPVGCRDALLRLTAGMIPTRVTTAGSIAEIRDLARTFAREVGGV</sequence>
<dbReference type="EC" id="2.7.1.21" evidence="1"/>
<dbReference type="EMBL" id="X01712">
    <property type="protein sequence ID" value="CAA25858.1"/>
    <property type="molecule type" value="Genomic_DNA"/>
</dbReference>
<dbReference type="EMBL" id="V00466">
    <property type="protein sequence ID" value="CAA23740.1"/>
    <property type="molecule type" value="Genomic_DNA"/>
</dbReference>
<dbReference type="EMBL" id="M29942">
    <property type="protein sequence ID" value="AAA45856.1"/>
    <property type="molecule type" value="Genomic_DNA"/>
</dbReference>
<dbReference type="PIR" id="A90648">
    <property type="entry name" value="KIBET3"/>
</dbReference>
<dbReference type="SMR" id="P04407"/>
<dbReference type="BindingDB" id="P04407"/>
<dbReference type="DrugCentral" id="P04407"/>
<dbReference type="GO" id="GO:0005524">
    <property type="term" value="F:ATP binding"/>
    <property type="evidence" value="ECO:0007669"/>
    <property type="project" value="UniProtKB-KW"/>
</dbReference>
<dbReference type="GO" id="GO:0004797">
    <property type="term" value="F:thymidine kinase activity"/>
    <property type="evidence" value="ECO:0007669"/>
    <property type="project" value="UniProtKB-EC"/>
</dbReference>
<dbReference type="GO" id="GO:0071897">
    <property type="term" value="P:DNA biosynthetic process"/>
    <property type="evidence" value="ECO:0007669"/>
    <property type="project" value="UniProtKB-KW"/>
</dbReference>
<dbReference type="GO" id="GO:0006230">
    <property type="term" value="P:TMP biosynthetic process"/>
    <property type="evidence" value="ECO:0007669"/>
    <property type="project" value="InterPro"/>
</dbReference>
<dbReference type="Gene3D" id="3.40.50.300">
    <property type="entry name" value="P-loop containing nucleotide triphosphate hydrolases"/>
    <property type="match status" value="1"/>
</dbReference>
<dbReference type="HAMAP" id="MF_04029">
    <property type="entry name" value="HSV_KITH"/>
    <property type="match status" value="1"/>
</dbReference>
<dbReference type="InterPro" id="IPR001889">
    <property type="entry name" value="Herpes_TK"/>
</dbReference>
<dbReference type="InterPro" id="IPR027417">
    <property type="entry name" value="P-loop_NTPase"/>
</dbReference>
<dbReference type="Pfam" id="PF00693">
    <property type="entry name" value="Herpes_TK"/>
    <property type="match status" value="1"/>
</dbReference>
<dbReference type="SUPFAM" id="SSF52540">
    <property type="entry name" value="P-loop containing nucleoside triphosphate hydrolases"/>
    <property type="match status" value="1"/>
</dbReference>
<organism>
    <name type="scientific">Human herpesvirus 2 (strain 333)</name>
    <name type="common">HHV-2</name>
    <name type="synonym">Human herpes simplex virus 2</name>
    <dbReference type="NCBI Taxonomy" id="10313"/>
    <lineage>
        <taxon>Viruses</taxon>
        <taxon>Duplodnaviria</taxon>
        <taxon>Heunggongvirae</taxon>
        <taxon>Peploviricota</taxon>
        <taxon>Herviviricetes</taxon>
        <taxon>Herpesvirales</taxon>
        <taxon>Orthoherpesviridae</taxon>
        <taxon>Alphaherpesvirinae</taxon>
        <taxon>Simplexvirus</taxon>
        <taxon>Simplexvirus humanalpha2</taxon>
        <taxon>Human herpesvirus 2</taxon>
    </lineage>
</organism>
<accession>P04407</accession>
<protein>
    <recommendedName>
        <fullName evidence="1">Thymidine kinase</fullName>
        <ecNumber evidence="1">2.7.1.21</ecNumber>
    </recommendedName>
</protein>
<reference key="1">
    <citation type="journal article" date="1983" name="Biochim. Biophys. Acta">
        <title>Nucleotide sequence of the herpes simplex virus type 2 (HSV-2) thymidine kinase gene and predicted amino acid sequence of thymidine kinase polypeptide and its comparison with the HSV-1 thymidine kinase gene.</title>
        <authorList>
            <person name="Kit S."/>
            <person name="Kit M."/>
            <person name="Qavi H."/>
            <person name="Trkula D."/>
            <person name="Otsuka H."/>
        </authorList>
    </citation>
    <scope>NUCLEOTIDE SEQUENCE [GENOMIC DNA]</scope>
</reference>
<reference key="2">
    <citation type="journal article" date="1983" name="J. Virol.">
        <title>Nucleotide sequence of the herpes simplex virus type 2 thymidine kinase gene.</title>
        <authorList>
            <person name="Swain M.A."/>
            <person name="Galloway D.A."/>
        </authorList>
    </citation>
    <scope>NUCLEOTIDE SEQUENCE [GENOMIC DNA]</scope>
</reference>
<reference key="3">
    <citation type="journal article" date="1987" name="Antimicrob. Agents Chemother.">
        <title>Nucleotide sequence changes in thymidine kinase gene of herpes simplex virus type 2 clones from an isolate of a patient treated with acyclovir.</title>
        <authorList>
            <person name="Kit S."/>
            <person name="Sheppard M."/>
            <person name="Ichimura H."/>
            <person name="Nusinoff-Lehrman S."/>
            <person name="Ellis M.N."/>
            <person name="Fyfe J.A."/>
            <person name="Otsuka H."/>
        </authorList>
    </citation>
    <scope>NUCLEOTIDE SEQUENCE [GENOMIC DNA]</scope>
</reference>
<proteinExistence type="evidence at protein level"/>
<keyword id="KW-0067">ATP-binding</keyword>
<keyword id="KW-0237">DNA synthesis</keyword>
<keyword id="KW-0244">Early protein</keyword>
<keyword id="KW-0418">Kinase</keyword>
<keyword id="KW-0547">Nucleotide-binding</keyword>
<keyword id="KW-0808">Transferase</keyword>
<name>KITH_HHV23</name>
<organismHost>
    <name type="scientific">Homo sapiens</name>
    <name type="common">Human</name>
    <dbReference type="NCBI Taxonomy" id="9606"/>
</organismHost>